<evidence type="ECO:0000250" key="1"/>
<evidence type="ECO:0000255" key="2">
    <source>
        <dbReference type="HAMAP-Rule" id="MF_00118"/>
    </source>
</evidence>
<keyword id="KW-0963">Cytoplasm</keyword>
<keyword id="KW-0251">Elongation factor</keyword>
<keyword id="KW-0342">GTP-binding</keyword>
<keyword id="KW-0378">Hydrolase</keyword>
<keyword id="KW-0460">Magnesium</keyword>
<keyword id="KW-0479">Metal-binding</keyword>
<keyword id="KW-0547">Nucleotide-binding</keyword>
<keyword id="KW-0648">Protein biosynthesis</keyword>
<dbReference type="EC" id="3.6.5.3" evidence="2"/>
<dbReference type="EMBL" id="CP000702">
    <property type="protein sequence ID" value="ABQ47304.1"/>
    <property type="molecule type" value="Genomic_DNA"/>
</dbReference>
<dbReference type="RefSeq" id="WP_011943784.1">
    <property type="nucleotide sequence ID" value="NC_009486.1"/>
</dbReference>
<dbReference type="SMR" id="A5IM81"/>
<dbReference type="STRING" id="390874.Tpet_1290"/>
<dbReference type="KEGG" id="tpt:Tpet_1290"/>
<dbReference type="eggNOG" id="COG0050">
    <property type="taxonomic scope" value="Bacteria"/>
</dbReference>
<dbReference type="HOGENOM" id="CLU_007265_0_1_0"/>
<dbReference type="Proteomes" id="UP000006558">
    <property type="component" value="Chromosome"/>
</dbReference>
<dbReference type="GO" id="GO:0005829">
    <property type="term" value="C:cytosol"/>
    <property type="evidence" value="ECO:0007669"/>
    <property type="project" value="TreeGrafter"/>
</dbReference>
<dbReference type="GO" id="GO:0005525">
    <property type="term" value="F:GTP binding"/>
    <property type="evidence" value="ECO:0007669"/>
    <property type="project" value="UniProtKB-UniRule"/>
</dbReference>
<dbReference type="GO" id="GO:0003924">
    <property type="term" value="F:GTPase activity"/>
    <property type="evidence" value="ECO:0007669"/>
    <property type="project" value="InterPro"/>
</dbReference>
<dbReference type="GO" id="GO:0003746">
    <property type="term" value="F:translation elongation factor activity"/>
    <property type="evidence" value="ECO:0007669"/>
    <property type="project" value="UniProtKB-UniRule"/>
</dbReference>
<dbReference type="CDD" id="cd01884">
    <property type="entry name" value="EF_Tu"/>
    <property type="match status" value="1"/>
</dbReference>
<dbReference type="CDD" id="cd03697">
    <property type="entry name" value="EFTU_II"/>
    <property type="match status" value="1"/>
</dbReference>
<dbReference type="CDD" id="cd03707">
    <property type="entry name" value="EFTU_III"/>
    <property type="match status" value="1"/>
</dbReference>
<dbReference type="FunFam" id="2.40.30.10:FF:000001">
    <property type="entry name" value="Elongation factor Tu"/>
    <property type="match status" value="1"/>
</dbReference>
<dbReference type="FunFam" id="3.40.50.300:FF:000003">
    <property type="entry name" value="Elongation factor Tu"/>
    <property type="match status" value="1"/>
</dbReference>
<dbReference type="Gene3D" id="3.40.50.300">
    <property type="entry name" value="P-loop containing nucleotide triphosphate hydrolases"/>
    <property type="match status" value="1"/>
</dbReference>
<dbReference type="Gene3D" id="2.40.30.10">
    <property type="entry name" value="Translation factors"/>
    <property type="match status" value="2"/>
</dbReference>
<dbReference type="HAMAP" id="MF_00118_B">
    <property type="entry name" value="EF_Tu_B"/>
    <property type="match status" value="1"/>
</dbReference>
<dbReference type="InterPro" id="IPR041709">
    <property type="entry name" value="EF-Tu_GTP-bd"/>
</dbReference>
<dbReference type="InterPro" id="IPR050055">
    <property type="entry name" value="EF-Tu_GTPase"/>
</dbReference>
<dbReference type="InterPro" id="IPR004161">
    <property type="entry name" value="EFTu-like_2"/>
</dbReference>
<dbReference type="InterPro" id="IPR033720">
    <property type="entry name" value="EFTU_2"/>
</dbReference>
<dbReference type="InterPro" id="IPR031157">
    <property type="entry name" value="G_TR_CS"/>
</dbReference>
<dbReference type="InterPro" id="IPR027417">
    <property type="entry name" value="P-loop_NTPase"/>
</dbReference>
<dbReference type="InterPro" id="IPR005225">
    <property type="entry name" value="Small_GTP-bd"/>
</dbReference>
<dbReference type="InterPro" id="IPR000795">
    <property type="entry name" value="T_Tr_GTP-bd_dom"/>
</dbReference>
<dbReference type="InterPro" id="IPR009000">
    <property type="entry name" value="Transl_B-barrel_sf"/>
</dbReference>
<dbReference type="InterPro" id="IPR009001">
    <property type="entry name" value="Transl_elong_EF1A/Init_IF2_C"/>
</dbReference>
<dbReference type="InterPro" id="IPR004541">
    <property type="entry name" value="Transl_elong_EFTu/EF1A_bac/org"/>
</dbReference>
<dbReference type="InterPro" id="IPR004160">
    <property type="entry name" value="Transl_elong_EFTu/EF1A_C"/>
</dbReference>
<dbReference type="NCBIfam" id="TIGR00485">
    <property type="entry name" value="EF-Tu"/>
    <property type="match status" value="1"/>
</dbReference>
<dbReference type="NCBIfam" id="NF000766">
    <property type="entry name" value="PRK00049.1"/>
    <property type="match status" value="1"/>
</dbReference>
<dbReference type="NCBIfam" id="NF009372">
    <property type="entry name" value="PRK12735.1"/>
    <property type="match status" value="1"/>
</dbReference>
<dbReference type="NCBIfam" id="NF009373">
    <property type="entry name" value="PRK12736.1"/>
    <property type="match status" value="1"/>
</dbReference>
<dbReference type="NCBIfam" id="TIGR00231">
    <property type="entry name" value="small_GTP"/>
    <property type="match status" value="1"/>
</dbReference>
<dbReference type="PANTHER" id="PTHR43721:SF22">
    <property type="entry name" value="ELONGATION FACTOR TU, MITOCHONDRIAL"/>
    <property type="match status" value="1"/>
</dbReference>
<dbReference type="PANTHER" id="PTHR43721">
    <property type="entry name" value="ELONGATION FACTOR TU-RELATED"/>
    <property type="match status" value="1"/>
</dbReference>
<dbReference type="Pfam" id="PF00009">
    <property type="entry name" value="GTP_EFTU"/>
    <property type="match status" value="1"/>
</dbReference>
<dbReference type="Pfam" id="PF03144">
    <property type="entry name" value="GTP_EFTU_D2"/>
    <property type="match status" value="1"/>
</dbReference>
<dbReference type="Pfam" id="PF03143">
    <property type="entry name" value="GTP_EFTU_D3"/>
    <property type="match status" value="1"/>
</dbReference>
<dbReference type="PRINTS" id="PR00315">
    <property type="entry name" value="ELONGATNFCT"/>
</dbReference>
<dbReference type="SUPFAM" id="SSF50465">
    <property type="entry name" value="EF-Tu/eEF-1alpha/eIF2-gamma C-terminal domain"/>
    <property type="match status" value="1"/>
</dbReference>
<dbReference type="SUPFAM" id="SSF52540">
    <property type="entry name" value="P-loop containing nucleoside triphosphate hydrolases"/>
    <property type="match status" value="1"/>
</dbReference>
<dbReference type="SUPFAM" id="SSF50447">
    <property type="entry name" value="Translation proteins"/>
    <property type="match status" value="1"/>
</dbReference>
<dbReference type="PROSITE" id="PS00301">
    <property type="entry name" value="G_TR_1"/>
    <property type="match status" value="1"/>
</dbReference>
<dbReference type="PROSITE" id="PS51722">
    <property type="entry name" value="G_TR_2"/>
    <property type="match status" value="1"/>
</dbReference>
<gene>
    <name evidence="2" type="primary">tuf</name>
    <name type="ordered locus">Tpet_1290</name>
</gene>
<organism>
    <name type="scientific">Thermotoga petrophila (strain ATCC BAA-488 / DSM 13995 / JCM 10881 / RKU-1)</name>
    <dbReference type="NCBI Taxonomy" id="390874"/>
    <lineage>
        <taxon>Bacteria</taxon>
        <taxon>Thermotogati</taxon>
        <taxon>Thermotogota</taxon>
        <taxon>Thermotogae</taxon>
        <taxon>Thermotogales</taxon>
        <taxon>Thermotogaceae</taxon>
        <taxon>Thermotoga</taxon>
    </lineage>
</organism>
<proteinExistence type="inferred from homology"/>
<protein>
    <recommendedName>
        <fullName evidence="2">Elongation factor Tu</fullName>
        <shortName evidence="2">EF-Tu</shortName>
        <ecNumber evidence="2">3.6.5.3</ecNumber>
    </recommendedName>
</protein>
<sequence>MAKEKFVRTKPHVNVGTIGHIDHGKSTLTAAITKYLSLKGLAQYVPYDQIDKAPEEKARGITINITHVEYQTEKRHYAHIDCPGHADYIKNMITGAAQMDGAILVVAATDGPMPQTREHVLLARQVEVPYMIVFINKTDMVDDPELIDLVEMEVRDLLSQYGYPGDEVPVIRGSALKAVEAPNDPNHEAYKPIQELLDAMDNYIPEPQREVDKPFLMPIEDVFSITGRGTVVTGRIERGRIKPGDEVEIIGLSYEIRKTVVTSVEMFRKELDEGIAGDNVGCLLRGIDKDEVERGQVLAAPGSIKPHKRFKAQVYVLKKEEGGRHTPFTKGYKPQFYIRTADVTGEIVGLPEGVEMVMPGDHVEMEIELIYPVAIEKGQRFAVREGGRTVGAGVVTEVIE</sequence>
<reference key="1">
    <citation type="submission" date="2007-05" db="EMBL/GenBank/DDBJ databases">
        <title>Complete sequence of Thermotoga petrophila RKU-1.</title>
        <authorList>
            <consortium name="US DOE Joint Genome Institute"/>
            <person name="Copeland A."/>
            <person name="Lucas S."/>
            <person name="Lapidus A."/>
            <person name="Barry K."/>
            <person name="Glavina del Rio T."/>
            <person name="Dalin E."/>
            <person name="Tice H."/>
            <person name="Pitluck S."/>
            <person name="Sims D."/>
            <person name="Brettin T."/>
            <person name="Bruce D."/>
            <person name="Detter J.C."/>
            <person name="Han C."/>
            <person name="Tapia R."/>
            <person name="Schmutz J."/>
            <person name="Larimer F."/>
            <person name="Land M."/>
            <person name="Hauser L."/>
            <person name="Kyrpides N."/>
            <person name="Mikhailova N."/>
            <person name="Nelson K."/>
            <person name="Gogarten J.P."/>
            <person name="Noll K."/>
            <person name="Richardson P."/>
        </authorList>
    </citation>
    <scope>NUCLEOTIDE SEQUENCE [LARGE SCALE GENOMIC DNA]</scope>
    <source>
        <strain>ATCC BAA-488 / DSM 13995 / JCM 10881 / RKU-1</strain>
    </source>
</reference>
<feature type="chain" id="PRO_1000015778" description="Elongation factor Tu">
    <location>
        <begin position="1"/>
        <end position="400"/>
    </location>
</feature>
<feature type="domain" description="tr-type G">
    <location>
        <begin position="10"/>
        <end position="208"/>
    </location>
</feature>
<feature type="region of interest" description="G1" evidence="1">
    <location>
        <begin position="19"/>
        <end position="26"/>
    </location>
</feature>
<feature type="region of interest" description="G2" evidence="1">
    <location>
        <begin position="60"/>
        <end position="64"/>
    </location>
</feature>
<feature type="region of interest" description="G3" evidence="1">
    <location>
        <begin position="81"/>
        <end position="84"/>
    </location>
</feature>
<feature type="region of interest" description="G4" evidence="1">
    <location>
        <begin position="136"/>
        <end position="139"/>
    </location>
</feature>
<feature type="region of interest" description="G5" evidence="1">
    <location>
        <begin position="174"/>
        <end position="176"/>
    </location>
</feature>
<feature type="binding site" evidence="2">
    <location>
        <begin position="19"/>
        <end position="26"/>
    </location>
    <ligand>
        <name>GTP</name>
        <dbReference type="ChEBI" id="CHEBI:37565"/>
    </ligand>
</feature>
<feature type="binding site" evidence="2">
    <location>
        <position position="26"/>
    </location>
    <ligand>
        <name>Mg(2+)</name>
        <dbReference type="ChEBI" id="CHEBI:18420"/>
    </ligand>
</feature>
<feature type="binding site" evidence="2">
    <location>
        <begin position="81"/>
        <end position="85"/>
    </location>
    <ligand>
        <name>GTP</name>
        <dbReference type="ChEBI" id="CHEBI:37565"/>
    </ligand>
</feature>
<feature type="binding site" evidence="2">
    <location>
        <begin position="136"/>
        <end position="139"/>
    </location>
    <ligand>
        <name>GTP</name>
        <dbReference type="ChEBI" id="CHEBI:37565"/>
    </ligand>
</feature>
<accession>A5IM81</accession>
<comment type="function">
    <text evidence="2">GTP hydrolase that promotes the GTP-dependent binding of aminoacyl-tRNA to the A-site of ribosomes during protein biosynthesis.</text>
</comment>
<comment type="catalytic activity">
    <reaction evidence="2">
        <text>GTP + H2O = GDP + phosphate + H(+)</text>
        <dbReference type="Rhea" id="RHEA:19669"/>
        <dbReference type="ChEBI" id="CHEBI:15377"/>
        <dbReference type="ChEBI" id="CHEBI:15378"/>
        <dbReference type="ChEBI" id="CHEBI:37565"/>
        <dbReference type="ChEBI" id="CHEBI:43474"/>
        <dbReference type="ChEBI" id="CHEBI:58189"/>
        <dbReference type="EC" id="3.6.5.3"/>
    </reaction>
    <physiologicalReaction direction="left-to-right" evidence="2">
        <dbReference type="Rhea" id="RHEA:19670"/>
    </physiologicalReaction>
</comment>
<comment type="subunit">
    <text evidence="2">Monomer.</text>
</comment>
<comment type="subcellular location">
    <subcellularLocation>
        <location evidence="2">Cytoplasm</location>
    </subcellularLocation>
</comment>
<comment type="similarity">
    <text evidence="2">Belongs to the TRAFAC class translation factor GTPase superfamily. Classic translation factor GTPase family. EF-Tu/EF-1A subfamily.</text>
</comment>
<name>EFTU_THEP1</name>